<name>NAGB_CLOPE</name>
<protein>
    <recommendedName>
        <fullName evidence="1">Glucosamine-6-phosphate deaminase</fullName>
        <ecNumber evidence="1">3.5.99.6</ecNumber>
    </recommendedName>
    <alternativeName>
        <fullName evidence="1">GlcN6P deaminase</fullName>
        <shortName evidence="1">GNPDA</shortName>
    </alternativeName>
    <alternativeName>
        <fullName evidence="1">Glucosamine-6-phosphate isomerase</fullName>
    </alternativeName>
</protein>
<accession>Q8XHP8</accession>
<reference key="1">
    <citation type="journal article" date="2002" name="Proc. Natl. Acad. Sci. U.S.A.">
        <title>Complete genome sequence of Clostridium perfringens, an anaerobic flesh-eater.</title>
        <authorList>
            <person name="Shimizu T."/>
            <person name="Ohtani K."/>
            <person name="Hirakawa H."/>
            <person name="Ohshima K."/>
            <person name="Yamashita A."/>
            <person name="Shiba T."/>
            <person name="Ogasawara N."/>
            <person name="Hattori M."/>
            <person name="Kuhara S."/>
            <person name="Hayashi H."/>
        </authorList>
    </citation>
    <scope>NUCLEOTIDE SEQUENCE [LARGE SCALE GENOMIC DNA]</scope>
    <source>
        <strain>13 / Type A</strain>
    </source>
</reference>
<feature type="chain" id="PRO_0000160139" description="Glucosamine-6-phosphate deaminase">
    <location>
        <begin position="1"/>
        <end position="242"/>
    </location>
</feature>
<feature type="active site" description="Proton acceptor; for enolization step" evidence="1">
    <location>
        <position position="67"/>
    </location>
</feature>
<feature type="active site" description="For ring-opening step" evidence="1">
    <location>
        <position position="136"/>
    </location>
</feature>
<feature type="active site" description="Proton acceptor; for ring-opening step" evidence="1">
    <location>
        <position position="138"/>
    </location>
</feature>
<feature type="active site" description="For ring-opening step" evidence="1">
    <location>
        <position position="143"/>
    </location>
</feature>
<proteinExistence type="inferred from homology"/>
<comment type="function">
    <text evidence="1">Catalyzes the reversible isomerization-deamination of glucosamine 6-phosphate (GlcN6P) to form fructose 6-phosphate (Fru6P) and ammonium ion.</text>
</comment>
<comment type="catalytic activity">
    <reaction evidence="1">
        <text>alpha-D-glucosamine 6-phosphate + H2O = beta-D-fructose 6-phosphate + NH4(+)</text>
        <dbReference type="Rhea" id="RHEA:12172"/>
        <dbReference type="ChEBI" id="CHEBI:15377"/>
        <dbReference type="ChEBI" id="CHEBI:28938"/>
        <dbReference type="ChEBI" id="CHEBI:57634"/>
        <dbReference type="ChEBI" id="CHEBI:75989"/>
        <dbReference type="EC" id="3.5.99.6"/>
    </reaction>
</comment>
<comment type="pathway">
    <text evidence="1">Amino-sugar metabolism; N-acetylneuraminate degradation; D-fructose 6-phosphate from N-acetylneuraminate: step 5/5.</text>
</comment>
<comment type="similarity">
    <text evidence="1">Belongs to the glucosamine/galactosamine-6-phosphate isomerase family. NagB subfamily.</text>
</comment>
<dbReference type="EC" id="3.5.99.6" evidence="1"/>
<dbReference type="EMBL" id="BA000016">
    <property type="protein sequence ID" value="BAB82140.1"/>
    <property type="molecule type" value="Genomic_DNA"/>
</dbReference>
<dbReference type="RefSeq" id="WP_003482387.1">
    <property type="nucleotide sequence ID" value="NC_003366.1"/>
</dbReference>
<dbReference type="SMR" id="Q8XHP8"/>
<dbReference type="STRING" id="195102.gene:10491752"/>
<dbReference type="KEGG" id="cpe:CPE2434"/>
<dbReference type="HOGENOM" id="CLU_049611_1_1_9"/>
<dbReference type="UniPathway" id="UPA00629">
    <property type="reaction ID" value="UER00684"/>
</dbReference>
<dbReference type="Proteomes" id="UP000000818">
    <property type="component" value="Chromosome"/>
</dbReference>
<dbReference type="GO" id="GO:0005737">
    <property type="term" value="C:cytoplasm"/>
    <property type="evidence" value="ECO:0007669"/>
    <property type="project" value="TreeGrafter"/>
</dbReference>
<dbReference type="GO" id="GO:0004342">
    <property type="term" value="F:glucosamine-6-phosphate deaminase activity"/>
    <property type="evidence" value="ECO:0007669"/>
    <property type="project" value="UniProtKB-UniRule"/>
</dbReference>
<dbReference type="GO" id="GO:0042802">
    <property type="term" value="F:identical protein binding"/>
    <property type="evidence" value="ECO:0007669"/>
    <property type="project" value="TreeGrafter"/>
</dbReference>
<dbReference type="GO" id="GO:0005975">
    <property type="term" value="P:carbohydrate metabolic process"/>
    <property type="evidence" value="ECO:0007669"/>
    <property type="project" value="InterPro"/>
</dbReference>
<dbReference type="GO" id="GO:0006043">
    <property type="term" value="P:glucosamine catabolic process"/>
    <property type="evidence" value="ECO:0007669"/>
    <property type="project" value="TreeGrafter"/>
</dbReference>
<dbReference type="GO" id="GO:0006046">
    <property type="term" value="P:N-acetylglucosamine catabolic process"/>
    <property type="evidence" value="ECO:0007669"/>
    <property type="project" value="TreeGrafter"/>
</dbReference>
<dbReference type="GO" id="GO:0019262">
    <property type="term" value="P:N-acetylneuraminate catabolic process"/>
    <property type="evidence" value="ECO:0007669"/>
    <property type="project" value="UniProtKB-UniRule"/>
</dbReference>
<dbReference type="CDD" id="cd01399">
    <property type="entry name" value="GlcN6P_deaminase"/>
    <property type="match status" value="1"/>
</dbReference>
<dbReference type="FunFam" id="3.40.50.1360:FF:000003">
    <property type="entry name" value="Glucosamine-6-phosphate deaminase"/>
    <property type="match status" value="1"/>
</dbReference>
<dbReference type="Gene3D" id="3.40.50.1360">
    <property type="match status" value="1"/>
</dbReference>
<dbReference type="HAMAP" id="MF_01241">
    <property type="entry name" value="GlcN6P_deamin"/>
    <property type="match status" value="1"/>
</dbReference>
<dbReference type="InterPro" id="IPR006148">
    <property type="entry name" value="Glc/Gal-6P_isomerase"/>
</dbReference>
<dbReference type="InterPro" id="IPR004547">
    <property type="entry name" value="Glucosamine6P_isomerase"/>
</dbReference>
<dbReference type="InterPro" id="IPR018321">
    <property type="entry name" value="Glucosamine6P_isomerase_CS"/>
</dbReference>
<dbReference type="InterPro" id="IPR037171">
    <property type="entry name" value="NagB/RpiA_transferase-like"/>
</dbReference>
<dbReference type="NCBIfam" id="TIGR00502">
    <property type="entry name" value="nagB"/>
    <property type="match status" value="1"/>
</dbReference>
<dbReference type="NCBIfam" id="NF001684">
    <property type="entry name" value="PRK00443.1-4"/>
    <property type="match status" value="1"/>
</dbReference>
<dbReference type="PANTHER" id="PTHR11280">
    <property type="entry name" value="GLUCOSAMINE-6-PHOSPHATE ISOMERASE"/>
    <property type="match status" value="1"/>
</dbReference>
<dbReference type="PANTHER" id="PTHR11280:SF5">
    <property type="entry name" value="GLUCOSAMINE-6-PHOSPHATE ISOMERASE"/>
    <property type="match status" value="1"/>
</dbReference>
<dbReference type="Pfam" id="PF01182">
    <property type="entry name" value="Glucosamine_iso"/>
    <property type="match status" value="1"/>
</dbReference>
<dbReference type="SUPFAM" id="SSF100950">
    <property type="entry name" value="NagB/RpiA/CoA transferase-like"/>
    <property type="match status" value="1"/>
</dbReference>
<dbReference type="PROSITE" id="PS01161">
    <property type="entry name" value="GLC_GALNAC_ISOMERASE"/>
    <property type="match status" value="1"/>
</dbReference>
<keyword id="KW-0119">Carbohydrate metabolism</keyword>
<keyword id="KW-0378">Hydrolase</keyword>
<keyword id="KW-1185">Reference proteome</keyword>
<evidence type="ECO:0000255" key="1">
    <source>
        <dbReference type="HAMAP-Rule" id="MF_01241"/>
    </source>
</evidence>
<gene>
    <name evidence="1" type="primary">nagB</name>
    <name type="ordered locus">CPE2434</name>
</gene>
<sequence>MRLIVTKNYEEMSKVAAKEMAEDIKRNPEIVLGLATGGTPVGMYKELIRMYNEGELDFSKVTSINLDEYVGLSGDHDQSYRYFMNTNLFNHINIDKNNTFVPNGLAENVEEECMAYDSRIQDMGGIDLQLLGLGANGHIGFNEPGEALSVGTHLTDLKESTIEANARFFDSIDDVPRKAITMGLGGIMKAKKIMVIASGEGKAEVVKAMMSGKITTEIPATMLQMHRDVILIVDEDAAKLLK</sequence>
<organism>
    <name type="scientific">Clostridium perfringens (strain 13 / Type A)</name>
    <dbReference type="NCBI Taxonomy" id="195102"/>
    <lineage>
        <taxon>Bacteria</taxon>
        <taxon>Bacillati</taxon>
        <taxon>Bacillota</taxon>
        <taxon>Clostridia</taxon>
        <taxon>Eubacteriales</taxon>
        <taxon>Clostridiaceae</taxon>
        <taxon>Clostridium</taxon>
    </lineage>
</organism>